<organism>
    <name type="scientific">Yersinia pestis (strain Pestoides F)</name>
    <dbReference type="NCBI Taxonomy" id="386656"/>
    <lineage>
        <taxon>Bacteria</taxon>
        <taxon>Pseudomonadati</taxon>
        <taxon>Pseudomonadota</taxon>
        <taxon>Gammaproteobacteria</taxon>
        <taxon>Enterobacterales</taxon>
        <taxon>Yersiniaceae</taxon>
        <taxon>Yersinia</taxon>
    </lineage>
</organism>
<comment type="similarity">
    <text evidence="1">Belongs to the UPF0250 family.</text>
</comment>
<protein>
    <recommendedName>
        <fullName evidence="1">UPF0250 protein YPDSF_2653</fullName>
    </recommendedName>
</protein>
<evidence type="ECO:0000255" key="1">
    <source>
        <dbReference type="HAMAP-Rule" id="MF_00659"/>
    </source>
</evidence>
<feature type="chain" id="PRO_1000061913" description="UPF0250 protein YPDSF_2653">
    <location>
        <begin position="1"/>
        <end position="87"/>
    </location>
</feature>
<sequence>MKTKLNELLEFPCSFTYKVMGIAEPQLVDQVVEVVQRHAPGEYTPQVKPSSKGNYHSVSITITATHIDQVETLYEELGNLELVKMVL</sequence>
<name>Y2653_YERPP</name>
<gene>
    <name type="ordered locus">YPDSF_2653</name>
</gene>
<accession>A4TP07</accession>
<reference key="1">
    <citation type="submission" date="2007-02" db="EMBL/GenBank/DDBJ databases">
        <title>Complete sequence of chromosome of Yersinia pestis Pestoides F.</title>
        <authorList>
            <consortium name="US DOE Joint Genome Institute"/>
            <person name="Copeland A."/>
            <person name="Lucas S."/>
            <person name="Lapidus A."/>
            <person name="Barry K."/>
            <person name="Detter J.C."/>
            <person name="Glavina del Rio T."/>
            <person name="Hammon N."/>
            <person name="Israni S."/>
            <person name="Dalin E."/>
            <person name="Tice H."/>
            <person name="Pitluck S."/>
            <person name="Di Bartolo G."/>
            <person name="Chain P."/>
            <person name="Malfatti S."/>
            <person name="Shin M."/>
            <person name="Vergez L."/>
            <person name="Schmutz J."/>
            <person name="Larimer F."/>
            <person name="Land M."/>
            <person name="Hauser L."/>
            <person name="Worsham P."/>
            <person name="Chu M."/>
            <person name="Bearden S."/>
            <person name="Garcia E."/>
            <person name="Richardson P."/>
        </authorList>
    </citation>
    <scope>NUCLEOTIDE SEQUENCE [LARGE SCALE GENOMIC DNA]</scope>
    <source>
        <strain>Pestoides F</strain>
    </source>
</reference>
<proteinExistence type="inferred from homology"/>
<dbReference type="EMBL" id="CP000668">
    <property type="protein sequence ID" value="ABP41019.1"/>
    <property type="molecule type" value="Genomic_DNA"/>
</dbReference>
<dbReference type="SMR" id="A4TP07"/>
<dbReference type="KEGG" id="ypp:YPDSF_2653"/>
<dbReference type="PATRIC" id="fig|386656.14.peg.4180"/>
<dbReference type="GO" id="GO:0005829">
    <property type="term" value="C:cytosol"/>
    <property type="evidence" value="ECO:0007669"/>
    <property type="project" value="TreeGrafter"/>
</dbReference>
<dbReference type="FunFam" id="3.30.70.260:FF:000002">
    <property type="entry name" value="UPF0250 protein YbeD"/>
    <property type="match status" value="1"/>
</dbReference>
<dbReference type="Gene3D" id="3.30.70.260">
    <property type="match status" value="1"/>
</dbReference>
<dbReference type="HAMAP" id="MF_00659">
    <property type="entry name" value="UPF0250"/>
    <property type="match status" value="1"/>
</dbReference>
<dbReference type="InterPro" id="IPR007454">
    <property type="entry name" value="UPF0250_YbeD-like"/>
</dbReference>
<dbReference type="InterPro" id="IPR027471">
    <property type="entry name" value="YbeD-like_sf"/>
</dbReference>
<dbReference type="NCBIfam" id="NF003447">
    <property type="entry name" value="PRK04998.1"/>
    <property type="match status" value="1"/>
</dbReference>
<dbReference type="PANTHER" id="PTHR38036">
    <property type="entry name" value="UPF0250 PROTEIN YBED"/>
    <property type="match status" value="1"/>
</dbReference>
<dbReference type="PANTHER" id="PTHR38036:SF1">
    <property type="entry name" value="UPF0250 PROTEIN YBED"/>
    <property type="match status" value="1"/>
</dbReference>
<dbReference type="Pfam" id="PF04359">
    <property type="entry name" value="DUF493"/>
    <property type="match status" value="1"/>
</dbReference>
<dbReference type="SUPFAM" id="SSF117991">
    <property type="entry name" value="YbeD/HP0495-like"/>
    <property type="match status" value="1"/>
</dbReference>